<feature type="chain" id="PRO_0000125455" description="Kinesin-like protein K39">
    <location>
        <begin position="1"/>
        <end position="955" status="greater than"/>
    </location>
</feature>
<feature type="domain" description="Kinesin motor" evidence="2">
    <location>
        <begin position="12"/>
        <end position="392"/>
    </location>
</feature>
<feature type="repeat" description="1">
    <location>
        <begin position="704"/>
        <end position="742"/>
    </location>
</feature>
<feature type="repeat" description="2">
    <location>
        <begin position="743"/>
        <end position="781"/>
    </location>
</feature>
<feature type="repeat" description="3">
    <location>
        <begin position="782"/>
        <end position="820"/>
    </location>
</feature>
<feature type="repeat" description="4">
    <location>
        <begin position="821"/>
        <end position="859"/>
    </location>
</feature>
<feature type="repeat" description="5">
    <location>
        <begin position="860"/>
        <end position="898"/>
    </location>
</feature>
<feature type="repeat" description="6">
    <location>
        <begin position="899"/>
        <end position="937"/>
    </location>
</feature>
<feature type="repeat" description="7">
    <location>
        <begin position="938"/>
        <end position="955" status="greater than"/>
    </location>
</feature>
<feature type="region of interest" description="Disordered" evidence="3">
    <location>
        <begin position="682"/>
        <end position="712"/>
    </location>
</feature>
<feature type="region of interest" description="7 X 39 AA approximate tandem repeats">
    <location>
        <begin position="704"/>
        <end position="955" status="greater than"/>
    </location>
</feature>
<feature type="region of interest" description="Disordered" evidence="3">
    <location>
        <begin position="725"/>
        <end position="955"/>
    </location>
</feature>
<feature type="coiled-coil region" evidence="1">
    <location>
        <begin position="426"/>
        <end position="955" status="greater than"/>
    </location>
</feature>
<feature type="compositionally biased region" description="Basic and acidic residues" evidence="3">
    <location>
        <begin position="785"/>
        <end position="794"/>
    </location>
</feature>
<feature type="compositionally biased region" description="Basic and acidic residues" evidence="3">
    <location>
        <begin position="824"/>
        <end position="833"/>
    </location>
</feature>
<feature type="compositionally biased region" description="Basic and acidic residues" evidence="3">
    <location>
        <begin position="863"/>
        <end position="872"/>
    </location>
</feature>
<feature type="compositionally biased region" description="Basic and acidic residues" evidence="3">
    <location>
        <begin position="902"/>
        <end position="911"/>
    </location>
</feature>
<feature type="compositionally biased region" description="Basic and acidic residues" evidence="3">
    <location>
        <begin position="941"/>
        <end position="955"/>
    </location>
</feature>
<feature type="binding site" evidence="2">
    <location>
        <begin position="122"/>
        <end position="129"/>
    </location>
    <ligand>
        <name>ATP</name>
        <dbReference type="ChEBI" id="CHEBI:30616"/>
    </ligand>
</feature>
<feature type="non-terminal residue">
    <location>
        <position position="955"/>
    </location>
</feature>
<name>KINL_LEICH</name>
<evidence type="ECO:0000255" key="1"/>
<evidence type="ECO:0000255" key="2">
    <source>
        <dbReference type="PROSITE-ProRule" id="PRU00283"/>
    </source>
</evidence>
<evidence type="ECO:0000256" key="3">
    <source>
        <dbReference type="SAM" id="MobiDB-lite"/>
    </source>
</evidence>
<evidence type="ECO:0000305" key="4"/>
<comment type="subcellular location">
    <subcellularLocation>
        <location evidence="4">Cytoplasm</location>
        <location evidence="4">Cytoskeleton</location>
    </subcellularLocation>
</comment>
<comment type="developmental stage">
    <text>Predominant in amastigotes.</text>
</comment>
<comment type="similarity">
    <text evidence="2">Belongs to the TRAFAC class myosin-kinesin ATPase superfamily. Kinesin family.</text>
</comment>
<dbReference type="EMBL" id="L07879">
    <property type="protein sequence ID" value="AAA29254.1"/>
    <property type="molecule type" value="Genomic_DNA"/>
</dbReference>
<dbReference type="PIR" id="A47334">
    <property type="entry name" value="A47334"/>
</dbReference>
<dbReference type="SMR" id="P46865"/>
<dbReference type="GO" id="GO:0005737">
    <property type="term" value="C:cytoplasm"/>
    <property type="evidence" value="ECO:0007669"/>
    <property type="project" value="UniProtKB-KW"/>
</dbReference>
<dbReference type="GO" id="GO:0072686">
    <property type="term" value="C:mitotic spindle"/>
    <property type="evidence" value="ECO:0007669"/>
    <property type="project" value="TreeGrafter"/>
</dbReference>
<dbReference type="GO" id="GO:0005876">
    <property type="term" value="C:spindle microtubule"/>
    <property type="evidence" value="ECO:0007669"/>
    <property type="project" value="TreeGrafter"/>
</dbReference>
<dbReference type="GO" id="GO:0005524">
    <property type="term" value="F:ATP binding"/>
    <property type="evidence" value="ECO:0007669"/>
    <property type="project" value="UniProtKB-KW"/>
</dbReference>
<dbReference type="GO" id="GO:0008017">
    <property type="term" value="F:microtubule binding"/>
    <property type="evidence" value="ECO:0007669"/>
    <property type="project" value="InterPro"/>
</dbReference>
<dbReference type="GO" id="GO:0008574">
    <property type="term" value="F:plus-end-directed microtubule motor activity"/>
    <property type="evidence" value="ECO:0007669"/>
    <property type="project" value="TreeGrafter"/>
</dbReference>
<dbReference type="GO" id="GO:0007018">
    <property type="term" value="P:microtubule-based movement"/>
    <property type="evidence" value="ECO:0007669"/>
    <property type="project" value="InterPro"/>
</dbReference>
<dbReference type="GO" id="GO:0090307">
    <property type="term" value="P:mitotic spindle assembly"/>
    <property type="evidence" value="ECO:0007669"/>
    <property type="project" value="TreeGrafter"/>
</dbReference>
<dbReference type="GO" id="GO:0051231">
    <property type="term" value="P:spindle elongation"/>
    <property type="evidence" value="ECO:0007669"/>
    <property type="project" value="TreeGrafter"/>
</dbReference>
<dbReference type="FunFam" id="3.40.850.10:FF:000042">
    <property type="entry name" value="Kinesin family member 14"/>
    <property type="match status" value="1"/>
</dbReference>
<dbReference type="Gene3D" id="3.40.850.10">
    <property type="entry name" value="Kinesin motor domain"/>
    <property type="match status" value="1"/>
</dbReference>
<dbReference type="InterPro" id="IPR047149">
    <property type="entry name" value="KIF11-like"/>
</dbReference>
<dbReference type="InterPro" id="IPR019821">
    <property type="entry name" value="Kinesin_motor_CS"/>
</dbReference>
<dbReference type="InterPro" id="IPR001752">
    <property type="entry name" value="Kinesin_motor_dom"/>
</dbReference>
<dbReference type="InterPro" id="IPR036961">
    <property type="entry name" value="Kinesin_motor_dom_sf"/>
</dbReference>
<dbReference type="InterPro" id="IPR027417">
    <property type="entry name" value="P-loop_NTPase"/>
</dbReference>
<dbReference type="PANTHER" id="PTHR47970:SF12">
    <property type="entry name" value="KINESIN FAMILY MEMBER 11"/>
    <property type="match status" value="1"/>
</dbReference>
<dbReference type="PANTHER" id="PTHR47970">
    <property type="entry name" value="KINESIN-LIKE PROTEIN KIF11"/>
    <property type="match status" value="1"/>
</dbReference>
<dbReference type="Pfam" id="PF00225">
    <property type="entry name" value="Kinesin"/>
    <property type="match status" value="1"/>
</dbReference>
<dbReference type="PRINTS" id="PR00380">
    <property type="entry name" value="KINESINHEAVY"/>
</dbReference>
<dbReference type="SMART" id="SM00129">
    <property type="entry name" value="KISc"/>
    <property type="match status" value="1"/>
</dbReference>
<dbReference type="SUPFAM" id="SSF52540">
    <property type="entry name" value="P-loop containing nucleoside triphosphate hydrolases"/>
    <property type="match status" value="1"/>
</dbReference>
<dbReference type="PROSITE" id="PS00411">
    <property type="entry name" value="KINESIN_MOTOR_1"/>
    <property type="match status" value="1"/>
</dbReference>
<dbReference type="PROSITE" id="PS50067">
    <property type="entry name" value="KINESIN_MOTOR_2"/>
    <property type="match status" value="1"/>
</dbReference>
<accession>P46865</accession>
<sequence>MHPSTVRREAERVKVSVRVRPLNERENNAPEGTKVTVAAKQAAAVVTVKVLGGSNNSGAAESMGTARRVAQDFQFDHVFWSVETPDACGATPATQADVFRTIGYPLVQHAFDGFNSCLFAYGQTGSGKTYTMMGADVSALSGEGNGVTPRICLEIFARKASVEAQGHSRWIVELGYVEVYNERVSDLLGKRKKGVKGGGEEVYVDVREHPSRGVFLEGQRLVEVGSLDDVVRLIEIGNGVRHTASTKMNDRSSRSHAIIMLLLREERTMTTKSGETIRTAGKSSRMNLVDLAGSERVAQSQVEGQQFKEATHINLSLTTLGRVIDVLADMATKGAKAQYSVAPFRDSKLTFILKDSLGGNSKTFMIATVSPSALNYEETLSTLRYASRARDIVNVAQVNEDPRARRIRELEEQMEDMRQAMAGGDPAYVSELKKKLALLESEAQKRAADLQALEREREHNQVQERLLRATEAEKSELESRAAALQEEMTATRRQADKMQALNLRLKEEQARKERELLKEMAKKDAALSKVRRRKDAEIASEREKLESTVAQLEREQREREVALDALQTHQRKLQEALESSERTAAERDQLLQQLTELQSERTQLSQVVTDRERLTRDLQRIQYEYGETELARDVALCAAQEMEARYHAAVFHLQTLLELATEWEDALRERALAERDEAAAAELDAAASTSQNARESACERLTSLEQQLRESEERAAELASQLEATAAAKSSAEQDRENTRATLEQQLRESEARAAELASQLEATAAAKMSAEQDRENTRATLEQQLRDSEERAAELASQLESTTAAKMSAEQDRESTRATLEQQLRDSEERAAELASQLESTTAAKMSAEQDRESTRATLEQQLRESEERAAELASQLESTTAAKMSAEQDRESTRATLEQQLRDSEERAAELASQLEATAAAKSSAEQDRENTRAALEQQLRDSEERAAELASQ</sequence>
<keyword id="KW-0067">ATP-binding</keyword>
<keyword id="KW-0175">Coiled coil</keyword>
<keyword id="KW-0963">Cytoplasm</keyword>
<keyword id="KW-0206">Cytoskeleton</keyword>
<keyword id="KW-0493">Microtubule</keyword>
<keyword id="KW-0505">Motor protein</keyword>
<keyword id="KW-0547">Nucleotide-binding</keyword>
<keyword id="KW-0677">Repeat</keyword>
<organism>
    <name type="scientific">Leishmania chagasi</name>
    <dbReference type="NCBI Taxonomy" id="44271"/>
    <lineage>
        <taxon>Eukaryota</taxon>
        <taxon>Discoba</taxon>
        <taxon>Euglenozoa</taxon>
        <taxon>Kinetoplastea</taxon>
        <taxon>Metakinetoplastina</taxon>
        <taxon>Trypanosomatida</taxon>
        <taxon>Trypanosomatidae</taxon>
        <taxon>Leishmaniinae</taxon>
        <taxon>Leishmania</taxon>
    </lineage>
</organism>
<protein>
    <recommendedName>
        <fullName>Kinesin-like protein K39</fullName>
    </recommendedName>
</protein>
<reference key="1">
    <citation type="journal article" date="1993" name="Proc. Natl. Acad. Sci. U.S.A.">
        <title>Molecular characterization of a kinesin-related antigen of Leishmania chagasi that detects specific antibody in African and American visceral leishmaniasis.</title>
        <authorList>
            <person name="Burns J.M. Jr."/>
            <person name="Shreffler W.G."/>
            <person name="Benson D.R."/>
            <person name="Ghalib H.W."/>
            <person name="Badaro R."/>
            <person name="Reed S.G."/>
        </authorList>
    </citation>
    <scope>NUCLEOTIDE SEQUENCE [GENOMIC DNA]</scope>
    <source>
        <strain>MHOM/BR/82/BA-2</strain>
    </source>
</reference>
<gene>
    <name type="primary">KIN</name>
</gene>
<proteinExistence type="evidence at transcript level"/>